<proteinExistence type="inferred from homology"/>
<protein>
    <recommendedName>
        <fullName evidence="1">Fatty acid oxidation complex subunit alpha</fullName>
    </recommendedName>
    <domain>
        <recommendedName>
            <fullName evidence="1">Enoyl-CoA hydratase/Delta(3)-cis-Delta(2)-trans-enoyl-CoA isomerase/3-hydroxybutyryl-CoA epimerase</fullName>
            <ecNumber evidence="1">4.2.1.17</ecNumber>
            <ecNumber evidence="1">5.1.2.3</ecNumber>
            <ecNumber evidence="1">5.3.3.8</ecNumber>
        </recommendedName>
    </domain>
    <domain>
        <recommendedName>
            <fullName evidence="1">3-hydroxyacyl-CoA dehydrogenase</fullName>
            <ecNumber evidence="1">1.1.1.35</ecNumber>
        </recommendedName>
    </domain>
</protein>
<evidence type="ECO:0000255" key="1">
    <source>
        <dbReference type="HAMAP-Rule" id="MF_01621"/>
    </source>
</evidence>
<dbReference type="EC" id="4.2.1.17" evidence="1"/>
<dbReference type="EC" id="5.1.2.3" evidence="1"/>
<dbReference type="EC" id="5.3.3.8" evidence="1"/>
<dbReference type="EC" id="1.1.1.35" evidence="1"/>
<dbReference type="EMBL" id="AE016853">
    <property type="protein sequence ID" value="AAO56992.1"/>
    <property type="molecule type" value="Genomic_DNA"/>
</dbReference>
<dbReference type="RefSeq" id="NP_793297.1">
    <property type="nucleotide sequence ID" value="NC_004578.1"/>
</dbReference>
<dbReference type="RefSeq" id="WP_011104595.1">
    <property type="nucleotide sequence ID" value="NC_004578.1"/>
</dbReference>
<dbReference type="SMR" id="Q87ZB2"/>
<dbReference type="STRING" id="223283.PSPTO_3517"/>
<dbReference type="GeneID" id="1185182"/>
<dbReference type="KEGG" id="pst:PSPTO_3517"/>
<dbReference type="PATRIC" id="fig|223283.9.peg.3602"/>
<dbReference type="eggNOG" id="COG1024">
    <property type="taxonomic scope" value="Bacteria"/>
</dbReference>
<dbReference type="eggNOG" id="COG1250">
    <property type="taxonomic scope" value="Bacteria"/>
</dbReference>
<dbReference type="HOGENOM" id="CLU_009834_16_3_6"/>
<dbReference type="OrthoDB" id="5389341at2"/>
<dbReference type="PhylomeDB" id="Q87ZB2"/>
<dbReference type="UniPathway" id="UPA00659"/>
<dbReference type="Proteomes" id="UP000002515">
    <property type="component" value="Chromosome"/>
</dbReference>
<dbReference type="GO" id="GO:0036125">
    <property type="term" value="C:fatty acid beta-oxidation multienzyme complex"/>
    <property type="evidence" value="ECO:0007669"/>
    <property type="project" value="InterPro"/>
</dbReference>
<dbReference type="GO" id="GO:0008692">
    <property type="term" value="F:3-hydroxybutyryl-CoA epimerase activity"/>
    <property type="evidence" value="ECO:0007669"/>
    <property type="project" value="UniProtKB-UniRule"/>
</dbReference>
<dbReference type="GO" id="GO:0004165">
    <property type="term" value="F:delta(3)-delta(2)-enoyl-CoA isomerase activity"/>
    <property type="evidence" value="ECO:0007669"/>
    <property type="project" value="UniProtKB-UniRule"/>
</dbReference>
<dbReference type="GO" id="GO:0004300">
    <property type="term" value="F:enoyl-CoA hydratase activity"/>
    <property type="evidence" value="ECO:0007669"/>
    <property type="project" value="UniProtKB-UniRule"/>
</dbReference>
<dbReference type="GO" id="GO:0016509">
    <property type="term" value="F:long-chain-3-hydroxyacyl-CoA dehydrogenase activity"/>
    <property type="evidence" value="ECO:0007669"/>
    <property type="project" value="TreeGrafter"/>
</dbReference>
<dbReference type="GO" id="GO:0070403">
    <property type="term" value="F:NAD+ binding"/>
    <property type="evidence" value="ECO:0007669"/>
    <property type="project" value="InterPro"/>
</dbReference>
<dbReference type="GO" id="GO:0006635">
    <property type="term" value="P:fatty acid beta-oxidation"/>
    <property type="evidence" value="ECO:0007669"/>
    <property type="project" value="UniProtKB-UniRule"/>
</dbReference>
<dbReference type="CDD" id="cd06558">
    <property type="entry name" value="crotonase-like"/>
    <property type="match status" value="1"/>
</dbReference>
<dbReference type="FunFam" id="1.10.1040.50:FF:000001">
    <property type="entry name" value="Fatty acid oxidation complex subunit alpha"/>
    <property type="match status" value="1"/>
</dbReference>
<dbReference type="FunFam" id="3.90.226.10:FF:000018">
    <property type="entry name" value="Fatty acid oxidation complex subunit alpha"/>
    <property type="match status" value="1"/>
</dbReference>
<dbReference type="FunFam" id="3.40.50.720:FF:000009">
    <property type="entry name" value="Fatty oxidation complex, alpha subunit"/>
    <property type="match status" value="1"/>
</dbReference>
<dbReference type="Gene3D" id="1.10.1040.50">
    <property type="match status" value="1"/>
</dbReference>
<dbReference type="Gene3D" id="3.90.226.10">
    <property type="entry name" value="2-enoyl-CoA Hydratase, Chain A, domain 1"/>
    <property type="match status" value="1"/>
</dbReference>
<dbReference type="Gene3D" id="3.40.50.720">
    <property type="entry name" value="NAD(P)-binding Rossmann-like Domain"/>
    <property type="match status" value="1"/>
</dbReference>
<dbReference type="HAMAP" id="MF_01621">
    <property type="entry name" value="FadB"/>
    <property type="match status" value="1"/>
</dbReference>
<dbReference type="InterPro" id="IPR006180">
    <property type="entry name" value="3-OHacyl-CoA_DH_CS"/>
</dbReference>
<dbReference type="InterPro" id="IPR006176">
    <property type="entry name" value="3-OHacyl-CoA_DH_NAD-bd"/>
</dbReference>
<dbReference type="InterPro" id="IPR006108">
    <property type="entry name" value="3HC_DH_C"/>
</dbReference>
<dbReference type="InterPro" id="IPR008927">
    <property type="entry name" value="6-PGluconate_DH-like_C_sf"/>
</dbReference>
<dbReference type="InterPro" id="IPR029045">
    <property type="entry name" value="ClpP/crotonase-like_dom_sf"/>
</dbReference>
<dbReference type="InterPro" id="IPR001753">
    <property type="entry name" value="Enoyl-CoA_hydra/iso"/>
</dbReference>
<dbReference type="InterPro" id="IPR050136">
    <property type="entry name" value="FA_oxidation_alpha_subunit"/>
</dbReference>
<dbReference type="InterPro" id="IPR012799">
    <property type="entry name" value="FadB"/>
</dbReference>
<dbReference type="InterPro" id="IPR036291">
    <property type="entry name" value="NAD(P)-bd_dom_sf"/>
</dbReference>
<dbReference type="NCBIfam" id="TIGR02437">
    <property type="entry name" value="FadB"/>
    <property type="match status" value="1"/>
</dbReference>
<dbReference type="NCBIfam" id="NF008727">
    <property type="entry name" value="PRK11730.1"/>
    <property type="match status" value="1"/>
</dbReference>
<dbReference type="PANTHER" id="PTHR43612">
    <property type="entry name" value="TRIFUNCTIONAL ENZYME SUBUNIT ALPHA"/>
    <property type="match status" value="1"/>
</dbReference>
<dbReference type="PANTHER" id="PTHR43612:SF3">
    <property type="entry name" value="TRIFUNCTIONAL ENZYME SUBUNIT ALPHA, MITOCHONDRIAL"/>
    <property type="match status" value="1"/>
</dbReference>
<dbReference type="Pfam" id="PF00725">
    <property type="entry name" value="3HCDH"/>
    <property type="match status" value="1"/>
</dbReference>
<dbReference type="Pfam" id="PF02737">
    <property type="entry name" value="3HCDH_N"/>
    <property type="match status" value="1"/>
</dbReference>
<dbReference type="Pfam" id="PF00378">
    <property type="entry name" value="ECH_1"/>
    <property type="match status" value="1"/>
</dbReference>
<dbReference type="SUPFAM" id="SSF48179">
    <property type="entry name" value="6-phosphogluconate dehydrogenase C-terminal domain-like"/>
    <property type="match status" value="2"/>
</dbReference>
<dbReference type="SUPFAM" id="SSF52096">
    <property type="entry name" value="ClpP/crotonase"/>
    <property type="match status" value="1"/>
</dbReference>
<dbReference type="SUPFAM" id="SSF51735">
    <property type="entry name" value="NAD(P)-binding Rossmann-fold domains"/>
    <property type="match status" value="1"/>
</dbReference>
<dbReference type="PROSITE" id="PS00067">
    <property type="entry name" value="3HCDH"/>
    <property type="match status" value="1"/>
</dbReference>
<feature type="chain" id="PRO_0000109282" description="Fatty acid oxidation complex subunit alpha">
    <location>
        <begin position="1"/>
        <end position="721"/>
    </location>
</feature>
<feature type="region of interest" description="Enoyl-CoA hydratase/isomerase" evidence="1">
    <location>
        <begin position="1"/>
        <end position="190"/>
    </location>
</feature>
<feature type="region of interest" description="3-hydroxyacyl-CoA dehydrogenase" evidence="1">
    <location>
        <begin position="312"/>
        <end position="721"/>
    </location>
</feature>
<feature type="active site" description="For 3-hydroxyacyl-CoA dehydrogenase activity" evidence="1">
    <location>
        <position position="451"/>
    </location>
</feature>
<feature type="binding site" evidence="1">
    <location>
        <position position="297"/>
    </location>
    <ligand>
        <name>substrate</name>
    </ligand>
</feature>
<feature type="binding site" evidence="1">
    <location>
        <position position="325"/>
    </location>
    <ligand>
        <name>NAD(+)</name>
        <dbReference type="ChEBI" id="CHEBI:57540"/>
    </ligand>
</feature>
<feature type="binding site" evidence="1">
    <location>
        <position position="344"/>
    </location>
    <ligand>
        <name>NAD(+)</name>
        <dbReference type="ChEBI" id="CHEBI:57540"/>
    </ligand>
</feature>
<feature type="binding site" evidence="1">
    <location>
        <begin position="401"/>
        <end position="403"/>
    </location>
    <ligand>
        <name>NAD(+)</name>
        <dbReference type="ChEBI" id="CHEBI:57540"/>
    </ligand>
</feature>
<feature type="binding site" evidence="1">
    <location>
        <position position="408"/>
    </location>
    <ligand>
        <name>NAD(+)</name>
        <dbReference type="ChEBI" id="CHEBI:57540"/>
    </ligand>
</feature>
<feature type="binding site" evidence="1">
    <location>
        <position position="430"/>
    </location>
    <ligand>
        <name>NAD(+)</name>
        <dbReference type="ChEBI" id="CHEBI:57540"/>
    </ligand>
</feature>
<feature type="binding site" evidence="1">
    <location>
        <position position="454"/>
    </location>
    <ligand>
        <name>NAD(+)</name>
        <dbReference type="ChEBI" id="CHEBI:57540"/>
    </ligand>
</feature>
<feature type="binding site" evidence="1">
    <location>
        <position position="501"/>
    </location>
    <ligand>
        <name>substrate</name>
    </ligand>
</feature>
<feature type="binding site" evidence="1">
    <location>
        <position position="660"/>
    </location>
    <ligand>
        <name>substrate</name>
    </ligand>
</feature>
<feature type="site" description="Important for catalytic activity" evidence="1">
    <location>
        <position position="120"/>
    </location>
</feature>
<feature type="site" description="Important for catalytic activity" evidence="1">
    <location>
        <position position="140"/>
    </location>
</feature>
<accession>Q87ZB2</accession>
<gene>
    <name evidence="1" type="primary">fadB</name>
    <name type="ordered locus">PSPTO_3517</name>
</gene>
<sequence length="721" mass="77674">MIYEGKAITVKALESGIVELNFDLKGESVNKFNRLTLNELRQAVDAVKADASVKGVIVTSGKDVFIVGADITEFVDNFKLPEAELVAGNLEANRIFSDFEDLGVPTVVAINGIALGGGLEMCLAADYRVISSSARVGLPEVKLGLYPGFGGTVRLPRIIGADNAIEWIASGKENSAEDALKVGVVDAIVAPEKLQAAALDLIQRAISGEFDYKAKRQPKLDKLKLNAIEQMMAFETAKGFVAGQAGPNYPAPVEAIKTIQKAAIFGRDKALEIEAAGFVKMAKTSAAQSLIGLFLNDQELKKKAKGYDEVARDVKQAAVLGAGIMGGGIAYQSAVKGTPILMKDIREEAIQLGLNEASKLLGGRLEKGRLTAAKMAEALNAIRPTLSYGDFGNVDLVVEAVVENPKVKQAVLAEVEANVGENTILASNTSTISISLLAQALKRPENFVGMHFFNPVHMMPLVEVIRGEKSSEEAVATTVAYAKKMGKNPIVVNDCPGFLVNRVLFPYFGGFARLVSAGVDFVRIDKVMEKFGWPMGPAYLMDVVGIDTGHHGRDVMAEGFPDRMKDDRRSAVDALYEANRLGQKNGKGFYVYETDKKGKPKKVNDPAVLDVLKPIVYEQREVSDEDIINWMMIPLCLETVRCLEDGIVETAAEADMGLIYGIGFPPFRGGALRYIDSIGVAEFVALADRYAELGALYQPTAKLREMAANGQSFFGQASSEV</sequence>
<keyword id="KW-0276">Fatty acid metabolism</keyword>
<keyword id="KW-0413">Isomerase</keyword>
<keyword id="KW-0442">Lipid degradation</keyword>
<keyword id="KW-0443">Lipid metabolism</keyword>
<keyword id="KW-0456">Lyase</keyword>
<keyword id="KW-0511">Multifunctional enzyme</keyword>
<keyword id="KW-0520">NAD</keyword>
<keyword id="KW-0560">Oxidoreductase</keyword>
<keyword id="KW-1185">Reference proteome</keyword>
<reference key="1">
    <citation type="journal article" date="2003" name="Proc. Natl. Acad. Sci. U.S.A.">
        <title>The complete genome sequence of the Arabidopsis and tomato pathogen Pseudomonas syringae pv. tomato DC3000.</title>
        <authorList>
            <person name="Buell C.R."/>
            <person name="Joardar V."/>
            <person name="Lindeberg M."/>
            <person name="Selengut J."/>
            <person name="Paulsen I.T."/>
            <person name="Gwinn M.L."/>
            <person name="Dodson R.J."/>
            <person name="DeBoy R.T."/>
            <person name="Durkin A.S."/>
            <person name="Kolonay J.F."/>
            <person name="Madupu R."/>
            <person name="Daugherty S.C."/>
            <person name="Brinkac L.M."/>
            <person name="Beanan M.J."/>
            <person name="Haft D.H."/>
            <person name="Nelson W.C."/>
            <person name="Davidsen T.M."/>
            <person name="Zafar N."/>
            <person name="Zhou L."/>
            <person name="Liu J."/>
            <person name="Yuan Q."/>
            <person name="Khouri H.M."/>
            <person name="Fedorova N.B."/>
            <person name="Tran B."/>
            <person name="Russell D."/>
            <person name="Berry K.J."/>
            <person name="Utterback T.R."/>
            <person name="Van Aken S.E."/>
            <person name="Feldblyum T.V."/>
            <person name="D'Ascenzo M."/>
            <person name="Deng W.-L."/>
            <person name="Ramos A.R."/>
            <person name="Alfano J.R."/>
            <person name="Cartinhour S."/>
            <person name="Chatterjee A.K."/>
            <person name="Delaney T.P."/>
            <person name="Lazarowitz S.G."/>
            <person name="Martin G.B."/>
            <person name="Schneider D.J."/>
            <person name="Tang X."/>
            <person name="Bender C.L."/>
            <person name="White O."/>
            <person name="Fraser C.M."/>
            <person name="Collmer A."/>
        </authorList>
    </citation>
    <scope>NUCLEOTIDE SEQUENCE [LARGE SCALE GENOMIC DNA]</scope>
    <source>
        <strain>ATCC BAA-871 / DC3000</strain>
    </source>
</reference>
<name>FADB_PSESM</name>
<comment type="function">
    <text evidence="1">Involved in the aerobic and anaerobic degradation of long-chain fatty acids via beta-oxidation cycle. Catalyzes the formation of 3-oxoacyl-CoA from enoyl-CoA via L-3-hydroxyacyl-CoA. It can also use D-3-hydroxyacyl-CoA and cis-3-enoyl-CoA as substrate.</text>
</comment>
<comment type="catalytic activity">
    <reaction evidence="1">
        <text>a (3S)-3-hydroxyacyl-CoA + NAD(+) = a 3-oxoacyl-CoA + NADH + H(+)</text>
        <dbReference type="Rhea" id="RHEA:22432"/>
        <dbReference type="ChEBI" id="CHEBI:15378"/>
        <dbReference type="ChEBI" id="CHEBI:57318"/>
        <dbReference type="ChEBI" id="CHEBI:57540"/>
        <dbReference type="ChEBI" id="CHEBI:57945"/>
        <dbReference type="ChEBI" id="CHEBI:90726"/>
        <dbReference type="EC" id="1.1.1.35"/>
    </reaction>
</comment>
<comment type="catalytic activity">
    <reaction evidence="1">
        <text>a (3S)-3-hydroxyacyl-CoA = a (2E)-enoyl-CoA + H2O</text>
        <dbReference type="Rhea" id="RHEA:16105"/>
        <dbReference type="ChEBI" id="CHEBI:15377"/>
        <dbReference type="ChEBI" id="CHEBI:57318"/>
        <dbReference type="ChEBI" id="CHEBI:58856"/>
        <dbReference type="EC" id="4.2.1.17"/>
    </reaction>
</comment>
<comment type="catalytic activity">
    <reaction evidence="1">
        <text>a 4-saturated-(3S)-3-hydroxyacyl-CoA = a (3E)-enoyl-CoA + H2O</text>
        <dbReference type="Rhea" id="RHEA:20724"/>
        <dbReference type="ChEBI" id="CHEBI:15377"/>
        <dbReference type="ChEBI" id="CHEBI:58521"/>
        <dbReference type="ChEBI" id="CHEBI:137480"/>
        <dbReference type="EC" id="4.2.1.17"/>
    </reaction>
</comment>
<comment type="catalytic activity">
    <reaction evidence="1">
        <text>(3S)-3-hydroxybutanoyl-CoA = (3R)-3-hydroxybutanoyl-CoA</text>
        <dbReference type="Rhea" id="RHEA:21760"/>
        <dbReference type="ChEBI" id="CHEBI:57315"/>
        <dbReference type="ChEBI" id="CHEBI:57316"/>
        <dbReference type="EC" id="5.1.2.3"/>
    </reaction>
</comment>
<comment type="catalytic activity">
    <reaction evidence="1">
        <text>a (3Z)-enoyl-CoA = a 4-saturated (2E)-enoyl-CoA</text>
        <dbReference type="Rhea" id="RHEA:45900"/>
        <dbReference type="ChEBI" id="CHEBI:85097"/>
        <dbReference type="ChEBI" id="CHEBI:85489"/>
        <dbReference type="EC" id="5.3.3.8"/>
    </reaction>
</comment>
<comment type="catalytic activity">
    <reaction evidence="1">
        <text>a (3E)-enoyl-CoA = a 4-saturated (2E)-enoyl-CoA</text>
        <dbReference type="Rhea" id="RHEA:45228"/>
        <dbReference type="ChEBI" id="CHEBI:58521"/>
        <dbReference type="ChEBI" id="CHEBI:85097"/>
        <dbReference type="EC" id="5.3.3.8"/>
    </reaction>
</comment>
<comment type="pathway">
    <text evidence="1">Lipid metabolism; fatty acid beta-oxidation.</text>
</comment>
<comment type="subunit">
    <text evidence="1">Heterotetramer of two alpha chains (FadB) and two beta chains (FadA).</text>
</comment>
<comment type="similarity">
    <text evidence="1">In the N-terminal section; belongs to the enoyl-CoA hydratase/isomerase family.</text>
</comment>
<comment type="similarity">
    <text evidence="1">In the C-terminal section; belongs to the 3-hydroxyacyl-CoA dehydrogenase family.</text>
</comment>
<organism>
    <name type="scientific">Pseudomonas syringae pv. tomato (strain ATCC BAA-871 / DC3000)</name>
    <dbReference type="NCBI Taxonomy" id="223283"/>
    <lineage>
        <taxon>Bacteria</taxon>
        <taxon>Pseudomonadati</taxon>
        <taxon>Pseudomonadota</taxon>
        <taxon>Gammaproteobacteria</taxon>
        <taxon>Pseudomonadales</taxon>
        <taxon>Pseudomonadaceae</taxon>
        <taxon>Pseudomonas</taxon>
    </lineage>
</organism>